<dbReference type="EMBL" id="AE005174">
    <property type="protein sequence ID" value="AAG55150.1"/>
    <property type="molecule type" value="Genomic_DNA"/>
</dbReference>
<dbReference type="EMBL" id="BA000007">
    <property type="protein sequence ID" value="BAB34280.1"/>
    <property type="molecule type" value="Genomic_DNA"/>
</dbReference>
<dbReference type="PIR" id="A99736">
    <property type="entry name" value="A99736"/>
</dbReference>
<dbReference type="PIR" id="B85586">
    <property type="entry name" value="B85586"/>
</dbReference>
<dbReference type="RefSeq" id="NP_308884.1">
    <property type="nucleotide sequence ID" value="NC_002695.1"/>
</dbReference>
<dbReference type="RefSeq" id="WP_000042533.1">
    <property type="nucleotide sequence ID" value="NZ_VOAI01000006.1"/>
</dbReference>
<dbReference type="SMR" id="P0A8F9"/>
<dbReference type="STRING" id="155864.Z0998"/>
<dbReference type="GeneID" id="917595"/>
<dbReference type="GeneID" id="93776651"/>
<dbReference type="KEGG" id="ece:Z0998"/>
<dbReference type="KEGG" id="ecs:ECs_0857"/>
<dbReference type="PATRIC" id="fig|386585.9.peg.971"/>
<dbReference type="eggNOG" id="COG0556">
    <property type="taxonomic scope" value="Bacteria"/>
</dbReference>
<dbReference type="HOGENOM" id="CLU_009621_2_1_6"/>
<dbReference type="OMA" id="RYMHSEI"/>
<dbReference type="Proteomes" id="UP000000558">
    <property type="component" value="Chromosome"/>
</dbReference>
<dbReference type="Proteomes" id="UP000002519">
    <property type="component" value="Chromosome"/>
</dbReference>
<dbReference type="GO" id="GO:0005737">
    <property type="term" value="C:cytoplasm"/>
    <property type="evidence" value="ECO:0007669"/>
    <property type="project" value="UniProtKB-SubCell"/>
</dbReference>
<dbReference type="GO" id="GO:0009380">
    <property type="term" value="C:excinuclease repair complex"/>
    <property type="evidence" value="ECO:0007669"/>
    <property type="project" value="InterPro"/>
</dbReference>
<dbReference type="GO" id="GO:0005524">
    <property type="term" value="F:ATP binding"/>
    <property type="evidence" value="ECO:0007669"/>
    <property type="project" value="UniProtKB-UniRule"/>
</dbReference>
<dbReference type="GO" id="GO:0016887">
    <property type="term" value="F:ATP hydrolysis activity"/>
    <property type="evidence" value="ECO:0007669"/>
    <property type="project" value="InterPro"/>
</dbReference>
<dbReference type="GO" id="GO:0003677">
    <property type="term" value="F:DNA binding"/>
    <property type="evidence" value="ECO:0007669"/>
    <property type="project" value="UniProtKB-UniRule"/>
</dbReference>
<dbReference type="GO" id="GO:0009381">
    <property type="term" value="F:excinuclease ABC activity"/>
    <property type="evidence" value="ECO:0007669"/>
    <property type="project" value="UniProtKB-UniRule"/>
</dbReference>
<dbReference type="GO" id="GO:0006289">
    <property type="term" value="P:nucleotide-excision repair"/>
    <property type="evidence" value="ECO:0007669"/>
    <property type="project" value="UniProtKB-UniRule"/>
</dbReference>
<dbReference type="GO" id="GO:0009432">
    <property type="term" value="P:SOS response"/>
    <property type="evidence" value="ECO:0007669"/>
    <property type="project" value="UniProtKB-UniRule"/>
</dbReference>
<dbReference type="CDD" id="cd17916">
    <property type="entry name" value="DEXHc_UvrB"/>
    <property type="match status" value="1"/>
</dbReference>
<dbReference type="CDD" id="cd18790">
    <property type="entry name" value="SF2_C_UvrB"/>
    <property type="match status" value="1"/>
</dbReference>
<dbReference type="FunFam" id="3.40.50.300:FF:000257">
    <property type="entry name" value="UvrABC system protein B"/>
    <property type="match status" value="1"/>
</dbReference>
<dbReference type="FunFam" id="3.40.50.300:FF:000401">
    <property type="entry name" value="UvrABC system protein B"/>
    <property type="match status" value="1"/>
</dbReference>
<dbReference type="FunFam" id="3.40.50.300:FF:000477">
    <property type="entry name" value="UvrABC system protein B"/>
    <property type="match status" value="1"/>
</dbReference>
<dbReference type="Gene3D" id="3.40.50.300">
    <property type="entry name" value="P-loop containing nucleotide triphosphate hydrolases"/>
    <property type="match status" value="3"/>
</dbReference>
<dbReference type="Gene3D" id="4.10.860.10">
    <property type="entry name" value="UVR domain"/>
    <property type="match status" value="1"/>
</dbReference>
<dbReference type="HAMAP" id="MF_00204">
    <property type="entry name" value="UvrB"/>
    <property type="match status" value="1"/>
</dbReference>
<dbReference type="InterPro" id="IPR006935">
    <property type="entry name" value="Helicase/UvrB_N"/>
</dbReference>
<dbReference type="InterPro" id="IPR014001">
    <property type="entry name" value="Helicase_ATP-bd"/>
</dbReference>
<dbReference type="InterPro" id="IPR001650">
    <property type="entry name" value="Helicase_C-like"/>
</dbReference>
<dbReference type="InterPro" id="IPR027417">
    <property type="entry name" value="P-loop_NTPase"/>
</dbReference>
<dbReference type="InterPro" id="IPR001943">
    <property type="entry name" value="UVR_dom"/>
</dbReference>
<dbReference type="InterPro" id="IPR036876">
    <property type="entry name" value="UVR_dom_sf"/>
</dbReference>
<dbReference type="InterPro" id="IPR004807">
    <property type="entry name" value="UvrB"/>
</dbReference>
<dbReference type="InterPro" id="IPR041471">
    <property type="entry name" value="UvrB_inter"/>
</dbReference>
<dbReference type="InterPro" id="IPR024759">
    <property type="entry name" value="UvrB_YAD/RRR_dom"/>
</dbReference>
<dbReference type="NCBIfam" id="NF003673">
    <property type="entry name" value="PRK05298.1"/>
    <property type="match status" value="1"/>
</dbReference>
<dbReference type="NCBIfam" id="TIGR00631">
    <property type="entry name" value="uvrb"/>
    <property type="match status" value="1"/>
</dbReference>
<dbReference type="PANTHER" id="PTHR24029">
    <property type="entry name" value="UVRABC SYSTEM PROTEIN B"/>
    <property type="match status" value="1"/>
</dbReference>
<dbReference type="PANTHER" id="PTHR24029:SF0">
    <property type="entry name" value="UVRABC SYSTEM PROTEIN B"/>
    <property type="match status" value="1"/>
</dbReference>
<dbReference type="Pfam" id="PF00271">
    <property type="entry name" value="Helicase_C"/>
    <property type="match status" value="1"/>
</dbReference>
<dbReference type="Pfam" id="PF04851">
    <property type="entry name" value="ResIII"/>
    <property type="match status" value="1"/>
</dbReference>
<dbReference type="Pfam" id="PF02151">
    <property type="entry name" value="UVR"/>
    <property type="match status" value="1"/>
</dbReference>
<dbReference type="Pfam" id="PF12344">
    <property type="entry name" value="UvrB"/>
    <property type="match status" value="1"/>
</dbReference>
<dbReference type="Pfam" id="PF17757">
    <property type="entry name" value="UvrB_inter"/>
    <property type="match status" value="1"/>
</dbReference>
<dbReference type="SMART" id="SM00487">
    <property type="entry name" value="DEXDc"/>
    <property type="match status" value="1"/>
</dbReference>
<dbReference type="SMART" id="SM00490">
    <property type="entry name" value="HELICc"/>
    <property type="match status" value="1"/>
</dbReference>
<dbReference type="SUPFAM" id="SSF46600">
    <property type="entry name" value="C-terminal UvrC-binding domain of UvrB"/>
    <property type="match status" value="1"/>
</dbReference>
<dbReference type="SUPFAM" id="SSF52540">
    <property type="entry name" value="P-loop containing nucleoside triphosphate hydrolases"/>
    <property type="match status" value="2"/>
</dbReference>
<dbReference type="PROSITE" id="PS51192">
    <property type="entry name" value="HELICASE_ATP_BIND_1"/>
    <property type="match status" value="1"/>
</dbReference>
<dbReference type="PROSITE" id="PS51194">
    <property type="entry name" value="HELICASE_CTER"/>
    <property type="match status" value="1"/>
</dbReference>
<dbReference type="PROSITE" id="PS50151">
    <property type="entry name" value="UVR"/>
    <property type="match status" value="1"/>
</dbReference>
<organism>
    <name type="scientific">Escherichia coli O157:H7</name>
    <dbReference type="NCBI Taxonomy" id="83334"/>
    <lineage>
        <taxon>Bacteria</taxon>
        <taxon>Pseudomonadati</taxon>
        <taxon>Pseudomonadota</taxon>
        <taxon>Gammaproteobacteria</taxon>
        <taxon>Enterobacterales</taxon>
        <taxon>Enterobacteriaceae</taxon>
        <taxon>Escherichia</taxon>
    </lineage>
</organism>
<proteinExistence type="inferred from homology"/>
<comment type="function">
    <text evidence="1">The UvrABC repair system catalyzes the recognition and processing of DNA lesions. A damage recognition complex composed of 2 UvrA and 2 UvrB subunits scans DNA for abnormalities. Upon binding of the UvrA(2)B(2) complex to a putative damaged site, the DNA wraps around one UvrB monomer. DNA wrap is dependent on ATP binding by UvrB and probably causes local melting of the DNA helix, facilitating insertion of UvrB beta-hairpin between the DNA strands. Then UvrB probes one DNA strand for the presence of a lesion. If a lesion is found the UvrA subunits dissociate and the UvrB-DNA preincision complex is formed. This complex is subsequently bound by UvrC and the second UvrB is released. If no lesion is found, the DNA wraps around the other UvrB subunit that will check the other stand for damage (By similarity).</text>
</comment>
<comment type="subunit">
    <text evidence="1">Forms a heterotetramer with UvrA during the search for lesions. Interacts with UvrC in an incision complex (By similarity).</text>
</comment>
<comment type="subcellular location">
    <subcellularLocation>
        <location evidence="1">Cytoplasm</location>
    </subcellularLocation>
</comment>
<comment type="domain">
    <text evidence="1">The beta-hairpin motif is involved in DNA binding.</text>
</comment>
<comment type="similarity">
    <text evidence="4">Belongs to the UvrB family.</text>
</comment>
<name>UVRB_ECO57</name>
<evidence type="ECO:0000250" key="1"/>
<evidence type="ECO:0000255" key="2"/>
<evidence type="ECO:0000256" key="3">
    <source>
        <dbReference type="SAM" id="MobiDB-lite"/>
    </source>
</evidence>
<evidence type="ECO:0000305" key="4"/>
<accession>P0A8F9</accession>
<accession>P07025</accession>
<gene>
    <name type="primary">uvrB</name>
    <name type="ordered locus">Z0998</name>
    <name type="ordered locus">ECs0857</name>
</gene>
<sequence>MSKPFKLNSAFKPSGDQPEAIRRLEEGLEDGLAHQTLLGVTGSGKTFTIANVIADLQRPTMVLAPNKTLAAQLYGEMKEFFPENAVEYFVSYYDYYQPEAYVPSSDTFIEKDASVNEHIEQMRLSATKAMLERRDVVVVASVSAIYGLGDPDLYLKMMLHLTVGMIIDQRAILRRLAELQYARNDQAFQRGTFRVRGEVIDIFPAESDDIALRVELFDEEVERLSLFDPLTGQIVSTIPRFTIYPKTHYVTPRERIVQAMEEIKEELAARRKVLLENNKLLEEQRLTQRTQFDLEMMNELGYCSGIENYSRFLSGRGPGEPPPTLFDYLPADGLLVVDESHVTIPQIGGMYRGDRARKETLVEYGFRLPSALDNRPLKFEEFEALAPQTIYVSATPGNYELEKSGGDVVDQVVRPTGLLDPIIEVRPVATQVDDLLSEIRQRAAINERVLVTTLTKRMAEDLTEYLEEHGERVRYLHSDIDTVERMEIIRDLRLGEFDVLVGINLLREGLDMPEVSLVAILDADKEGFLRSERSLIQTIGRAARNVNGKAILYGDKITPSMAKAIGETERRREKQQKYNEEHGITPQGLNKKVVDILALGQNIAKTKAKGRGKSRPIVEPDNVPMDMSPKALQQKIHELEGLMMQHAQNLEFEEAAQIRDQLHQLRELFIAAS</sequence>
<feature type="initiator methionine" description="Removed" evidence="1">
    <location>
        <position position="1"/>
    </location>
</feature>
<feature type="chain" id="PRO_0000138391" description="UvrABC system protein B">
    <location>
        <begin position="2"/>
        <end position="673"/>
    </location>
</feature>
<feature type="domain" description="Helicase ATP-binding">
    <location>
        <begin position="26"/>
        <end position="415"/>
    </location>
</feature>
<feature type="domain" description="Helicase C-terminal">
    <location>
        <begin position="431"/>
        <end position="597"/>
    </location>
</feature>
<feature type="domain" description="UVR">
    <location>
        <begin position="633"/>
        <end position="668"/>
    </location>
</feature>
<feature type="region of interest" description="Disordered" evidence="3">
    <location>
        <begin position="608"/>
        <end position="627"/>
    </location>
</feature>
<feature type="short sequence motif" description="Beta-hairpin">
    <location>
        <begin position="92"/>
        <end position="115"/>
    </location>
</feature>
<feature type="binding site" evidence="2">
    <location>
        <begin position="39"/>
        <end position="46"/>
    </location>
    <ligand>
        <name>ATP</name>
        <dbReference type="ChEBI" id="CHEBI:30616"/>
    </ligand>
</feature>
<feature type="site" description="Cleavage" evidence="2">
    <location>
        <begin position="630"/>
        <end position="631"/>
    </location>
</feature>
<protein>
    <recommendedName>
        <fullName>UvrABC system protein B</fullName>
        <shortName>Protein UvrB</shortName>
    </recommendedName>
    <alternativeName>
        <fullName>Excinuclease ABC subunit B</fullName>
    </alternativeName>
</protein>
<reference key="1">
    <citation type="journal article" date="2001" name="Nature">
        <title>Genome sequence of enterohaemorrhagic Escherichia coli O157:H7.</title>
        <authorList>
            <person name="Perna N.T."/>
            <person name="Plunkett G. III"/>
            <person name="Burland V."/>
            <person name="Mau B."/>
            <person name="Glasner J.D."/>
            <person name="Rose D.J."/>
            <person name="Mayhew G.F."/>
            <person name="Evans P.S."/>
            <person name="Gregor J."/>
            <person name="Kirkpatrick H.A."/>
            <person name="Posfai G."/>
            <person name="Hackett J."/>
            <person name="Klink S."/>
            <person name="Boutin A."/>
            <person name="Shao Y."/>
            <person name="Miller L."/>
            <person name="Grotbeck E.J."/>
            <person name="Davis N.W."/>
            <person name="Lim A."/>
            <person name="Dimalanta E.T."/>
            <person name="Potamousis K."/>
            <person name="Apodaca J."/>
            <person name="Anantharaman T.S."/>
            <person name="Lin J."/>
            <person name="Yen G."/>
            <person name="Schwartz D.C."/>
            <person name="Welch R.A."/>
            <person name="Blattner F.R."/>
        </authorList>
    </citation>
    <scope>NUCLEOTIDE SEQUENCE [LARGE SCALE GENOMIC DNA]</scope>
    <source>
        <strain>O157:H7 / EDL933 / ATCC 700927 / EHEC</strain>
    </source>
</reference>
<reference key="2">
    <citation type="journal article" date="2001" name="DNA Res.">
        <title>Complete genome sequence of enterohemorrhagic Escherichia coli O157:H7 and genomic comparison with a laboratory strain K-12.</title>
        <authorList>
            <person name="Hayashi T."/>
            <person name="Makino K."/>
            <person name="Ohnishi M."/>
            <person name="Kurokawa K."/>
            <person name="Ishii K."/>
            <person name="Yokoyama K."/>
            <person name="Han C.-G."/>
            <person name="Ohtsubo E."/>
            <person name="Nakayama K."/>
            <person name="Murata T."/>
            <person name="Tanaka M."/>
            <person name="Tobe T."/>
            <person name="Iida T."/>
            <person name="Takami H."/>
            <person name="Honda T."/>
            <person name="Sasakawa C."/>
            <person name="Ogasawara N."/>
            <person name="Yasunaga T."/>
            <person name="Kuhara S."/>
            <person name="Shiba T."/>
            <person name="Hattori M."/>
            <person name="Shinagawa H."/>
        </authorList>
    </citation>
    <scope>NUCLEOTIDE SEQUENCE [LARGE SCALE GENOMIC DNA]</scope>
    <source>
        <strain>O157:H7 / Sakai / RIMD 0509952 / EHEC</strain>
    </source>
</reference>
<keyword id="KW-0067">ATP-binding</keyword>
<keyword id="KW-0963">Cytoplasm</keyword>
<keyword id="KW-0227">DNA damage</keyword>
<keyword id="KW-0228">DNA excision</keyword>
<keyword id="KW-0234">DNA repair</keyword>
<keyword id="KW-0267">Excision nuclease</keyword>
<keyword id="KW-0547">Nucleotide-binding</keyword>
<keyword id="KW-1185">Reference proteome</keyword>
<keyword id="KW-0742">SOS response</keyword>